<comment type="similarity">
    <text evidence="1">Belongs to the UPF0502 family.</text>
</comment>
<dbReference type="EMBL" id="CP000826">
    <property type="protein sequence ID" value="ABV41895.1"/>
    <property type="molecule type" value="Genomic_DNA"/>
</dbReference>
<dbReference type="SMR" id="A8GFK5"/>
<dbReference type="STRING" id="399741.Spro_2794"/>
<dbReference type="KEGG" id="spe:Spro_2794"/>
<dbReference type="eggNOG" id="COG3132">
    <property type="taxonomic scope" value="Bacteria"/>
</dbReference>
<dbReference type="HOGENOM" id="CLU_057831_2_0_6"/>
<dbReference type="OrthoDB" id="9784785at2"/>
<dbReference type="Gene3D" id="1.10.10.10">
    <property type="entry name" value="Winged helix-like DNA-binding domain superfamily/Winged helix DNA-binding domain"/>
    <property type="match status" value="2"/>
</dbReference>
<dbReference type="HAMAP" id="MF_01584">
    <property type="entry name" value="UPF0502"/>
    <property type="match status" value="1"/>
</dbReference>
<dbReference type="InterPro" id="IPR007432">
    <property type="entry name" value="DUF480"/>
</dbReference>
<dbReference type="InterPro" id="IPR036388">
    <property type="entry name" value="WH-like_DNA-bd_sf"/>
</dbReference>
<dbReference type="InterPro" id="IPR036390">
    <property type="entry name" value="WH_DNA-bd_sf"/>
</dbReference>
<dbReference type="NCBIfam" id="NF008413">
    <property type="entry name" value="PRK11239.1"/>
    <property type="match status" value="1"/>
</dbReference>
<dbReference type="PANTHER" id="PTHR38768">
    <property type="entry name" value="UPF0502 PROTEIN YCEH"/>
    <property type="match status" value="1"/>
</dbReference>
<dbReference type="PANTHER" id="PTHR38768:SF1">
    <property type="entry name" value="UPF0502 PROTEIN YCEH"/>
    <property type="match status" value="1"/>
</dbReference>
<dbReference type="Pfam" id="PF04337">
    <property type="entry name" value="DUF480"/>
    <property type="match status" value="1"/>
</dbReference>
<dbReference type="SUPFAM" id="SSF46785">
    <property type="entry name" value="Winged helix' DNA-binding domain"/>
    <property type="match status" value="2"/>
</dbReference>
<organism>
    <name type="scientific">Serratia proteamaculans (strain 568)</name>
    <dbReference type="NCBI Taxonomy" id="399741"/>
    <lineage>
        <taxon>Bacteria</taxon>
        <taxon>Pseudomonadati</taxon>
        <taxon>Pseudomonadota</taxon>
        <taxon>Gammaproteobacteria</taxon>
        <taxon>Enterobacterales</taxon>
        <taxon>Yersiniaceae</taxon>
        <taxon>Serratia</taxon>
    </lineage>
</organism>
<proteinExistence type="inferred from homology"/>
<reference key="1">
    <citation type="submission" date="2007-09" db="EMBL/GenBank/DDBJ databases">
        <title>Complete sequence of chromosome of Serratia proteamaculans 568.</title>
        <authorList>
            <consortium name="US DOE Joint Genome Institute"/>
            <person name="Copeland A."/>
            <person name="Lucas S."/>
            <person name="Lapidus A."/>
            <person name="Barry K."/>
            <person name="Glavina del Rio T."/>
            <person name="Dalin E."/>
            <person name="Tice H."/>
            <person name="Pitluck S."/>
            <person name="Chain P."/>
            <person name="Malfatti S."/>
            <person name="Shin M."/>
            <person name="Vergez L."/>
            <person name="Schmutz J."/>
            <person name="Larimer F."/>
            <person name="Land M."/>
            <person name="Hauser L."/>
            <person name="Kyrpides N."/>
            <person name="Kim E."/>
            <person name="Taghavi S."/>
            <person name="Newman L."/>
            <person name="Vangronsveld J."/>
            <person name="van der Lelie D."/>
            <person name="Richardson P."/>
        </authorList>
    </citation>
    <scope>NUCLEOTIDE SEQUENCE [LARGE SCALE GENOMIC DNA]</scope>
    <source>
        <strain>568</strain>
    </source>
</reference>
<gene>
    <name type="ordered locus">Spro_2794</name>
</gene>
<evidence type="ECO:0000255" key="1">
    <source>
        <dbReference type="HAMAP-Rule" id="MF_01584"/>
    </source>
</evidence>
<name>Y2794_SERP5</name>
<feature type="chain" id="PRO_1000069302" description="UPF0502 protein Spro_2794">
    <location>
        <begin position="1"/>
        <end position="214"/>
    </location>
</feature>
<sequence length="214" mass="24219">MKYELSAKEARVIGCLLEKQVTTPDQYPLSLNGIQLACNQKTNREPVMELTESEVQQILDLLLKKHFLRTLSGFGNRVVKYEHRFCNSEFGQLKLSAAEVAVVATLLLRGAQTPGELRTRTNRMHEFNDVSEVEQVLTNLSAREDGPFVVRLAREPGKRESRFMHLFCGQIDEAPAEAALENDTELTQRVSVLENEVAQLKQQLQALLERGTHD</sequence>
<accession>A8GFK5</accession>
<protein>
    <recommendedName>
        <fullName evidence="1">UPF0502 protein Spro_2794</fullName>
    </recommendedName>
</protein>